<comment type="function">
    <text evidence="1">Involved in unsaturated fatty acids biosynthesis. Catalyzes the dehydration of short chain beta-hydroxyacyl-ACPs and long chain saturated and unsaturated beta-hydroxyacyl-ACPs.</text>
</comment>
<comment type="catalytic activity">
    <reaction evidence="1">
        <text>a (3R)-hydroxyacyl-[ACP] = a (2E)-enoyl-[ACP] + H2O</text>
        <dbReference type="Rhea" id="RHEA:13097"/>
        <dbReference type="Rhea" id="RHEA-COMP:9925"/>
        <dbReference type="Rhea" id="RHEA-COMP:9945"/>
        <dbReference type="ChEBI" id="CHEBI:15377"/>
        <dbReference type="ChEBI" id="CHEBI:78784"/>
        <dbReference type="ChEBI" id="CHEBI:78827"/>
        <dbReference type="EC" id="4.2.1.59"/>
    </reaction>
</comment>
<comment type="subcellular location">
    <subcellularLocation>
        <location evidence="1">Cytoplasm</location>
    </subcellularLocation>
</comment>
<comment type="similarity">
    <text evidence="1">Belongs to the thioester dehydratase family. FabZ subfamily.</text>
</comment>
<gene>
    <name evidence="1" type="primary">fabZ</name>
    <name type="ordered locus">Athe_2047</name>
</gene>
<name>FABZ_CALBD</name>
<feature type="chain" id="PRO_1000134684" description="3-hydroxyacyl-[acyl-carrier-protein] dehydratase FabZ">
    <location>
        <begin position="1"/>
        <end position="140"/>
    </location>
</feature>
<feature type="active site" evidence="1">
    <location>
        <position position="48"/>
    </location>
</feature>
<sequence length="140" mass="15467">MYNIDKILEIIPHRYPFLLVDRIIEVEEGKRAKGIKNVTINEPFFQGHFPSNPVMPGVLIVEAMAQVGAVAMLLKEEFKGKTPFFAGIDKVRFKKVVKPGDVLVIETELISLKGSIGKAKAVAMVDGEVVCEGELLFAIK</sequence>
<reference key="1">
    <citation type="submission" date="2009-01" db="EMBL/GenBank/DDBJ databases">
        <title>Complete sequence of chromosome of Caldicellulosiruptor becscii DSM 6725.</title>
        <authorList>
            <person name="Lucas S."/>
            <person name="Copeland A."/>
            <person name="Lapidus A."/>
            <person name="Glavina del Rio T."/>
            <person name="Tice H."/>
            <person name="Bruce D."/>
            <person name="Goodwin L."/>
            <person name="Pitluck S."/>
            <person name="Sims D."/>
            <person name="Meincke L."/>
            <person name="Brettin T."/>
            <person name="Detter J.C."/>
            <person name="Han C."/>
            <person name="Larimer F."/>
            <person name="Land M."/>
            <person name="Hauser L."/>
            <person name="Kyrpides N."/>
            <person name="Ovchinnikova G."/>
            <person name="Kataeva I."/>
            <person name="Adams M.W.W."/>
        </authorList>
    </citation>
    <scope>NUCLEOTIDE SEQUENCE [LARGE SCALE GENOMIC DNA]</scope>
    <source>
        <strain>ATCC BAA-1888 / DSM 6725 / KCTC 15123 / Z-1320</strain>
    </source>
</reference>
<accession>B9MLD4</accession>
<dbReference type="EC" id="4.2.1.59" evidence="1"/>
<dbReference type="EMBL" id="CP001393">
    <property type="protein sequence ID" value="ACM61124.1"/>
    <property type="molecule type" value="Genomic_DNA"/>
</dbReference>
<dbReference type="RefSeq" id="WP_013429653.1">
    <property type="nucleotide sequence ID" value="NC_012034.1"/>
</dbReference>
<dbReference type="SMR" id="B9MLD4"/>
<dbReference type="STRING" id="521460.Athe_2047"/>
<dbReference type="GeneID" id="31773396"/>
<dbReference type="KEGG" id="ate:Athe_2047"/>
<dbReference type="eggNOG" id="COG0764">
    <property type="taxonomic scope" value="Bacteria"/>
</dbReference>
<dbReference type="HOGENOM" id="CLU_078912_3_0_9"/>
<dbReference type="Proteomes" id="UP000007723">
    <property type="component" value="Chromosome"/>
</dbReference>
<dbReference type="GO" id="GO:0005737">
    <property type="term" value="C:cytoplasm"/>
    <property type="evidence" value="ECO:0007669"/>
    <property type="project" value="UniProtKB-SubCell"/>
</dbReference>
<dbReference type="GO" id="GO:0016020">
    <property type="term" value="C:membrane"/>
    <property type="evidence" value="ECO:0007669"/>
    <property type="project" value="GOC"/>
</dbReference>
<dbReference type="GO" id="GO:0019171">
    <property type="term" value="F:(3R)-hydroxyacyl-[acyl-carrier-protein] dehydratase activity"/>
    <property type="evidence" value="ECO:0007669"/>
    <property type="project" value="UniProtKB-EC"/>
</dbReference>
<dbReference type="GO" id="GO:0006633">
    <property type="term" value="P:fatty acid biosynthetic process"/>
    <property type="evidence" value="ECO:0007669"/>
    <property type="project" value="UniProtKB-UniRule"/>
</dbReference>
<dbReference type="GO" id="GO:0009245">
    <property type="term" value="P:lipid A biosynthetic process"/>
    <property type="evidence" value="ECO:0007669"/>
    <property type="project" value="UniProtKB-UniRule"/>
</dbReference>
<dbReference type="CDD" id="cd01288">
    <property type="entry name" value="FabZ"/>
    <property type="match status" value="1"/>
</dbReference>
<dbReference type="FunFam" id="3.10.129.10:FF:000001">
    <property type="entry name" value="3-hydroxyacyl-[acyl-carrier-protein] dehydratase FabZ"/>
    <property type="match status" value="1"/>
</dbReference>
<dbReference type="Gene3D" id="3.10.129.10">
    <property type="entry name" value="Hotdog Thioesterase"/>
    <property type="match status" value="1"/>
</dbReference>
<dbReference type="HAMAP" id="MF_00406">
    <property type="entry name" value="FabZ"/>
    <property type="match status" value="1"/>
</dbReference>
<dbReference type="InterPro" id="IPR013114">
    <property type="entry name" value="FabA_FabZ"/>
</dbReference>
<dbReference type="InterPro" id="IPR010084">
    <property type="entry name" value="FabZ"/>
</dbReference>
<dbReference type="InterPro" id="IPR029069">
    <property type="entry name" value="HotDog_dom_sf"/>
</dbReference>
<dbReference type="NCBIfam" id="TIGR01750">
    <property type="entry name" value="fabZ"/>
    <property type="match status" value="1"/>
</dbReference>
<dbReference type="NCBIfam" id="NF000582">
    <property type="entry name" value="PRK00006.1"/>
    <property type="match status" value="1"/>
</dbReference>
<dbReference type="PANTHER" id="PTHR30272">
    <property type="entry name" value="3-HYDROXYACYL-[ACYL-CARRIER-PROTEIN] DEHYDRATASE"/>
    <property type="match status" value="1"/>
</dbReference>
<dbReference type="PANTHER" id="PTHR30272:SF1">
    <property type="entry name" value="3-HYDROXYACYL-[ACYL-CARRIER-PROTEIN] DEHYDRATASE"/>
    <property type="match status" value="1"/>
</dbReference>
<dbReference type="Pfam" id="PF07977">
    <property type="entry name" value="FabA"/>
    <property type="match status" value="1"/>
</dbReference>
<dbReference type="SUPFAM" id="SSF54637">
    <property type="entry name" value="Thioesterase/thiol ester dehydrase-isomerase"/>
    <property type="match status" value="1"/>
</dbReference>
<evidence type="ECO:0000255" key="1">
    <source>
        <dbReference type="HAMAP-Rule" id="MF_00406"/>
    </source>
</evidence>
<proteinExistence type="inferred from homology"/>
<keyword id="KW-0963">Cytoplasm</keyword>
<keyword id="KW-0441">Lipid A biosynthesis</keyword>
<keyword id="KW-0444">Lipid biosynthesis</keyword>
<keyword id="KW-0443">Lipid metabolism</keyword>
<keyword id="KW-0456">Lyase</keyword>
<protein>
    <recommendedName>
        <fullName evidence="1">3-hydroxyacyl-[acyl-carrier-protein] dehydratase FabZ</fullName>
        <ecNumber evidence="1">4.2.1.59</ecNumber>
    </recommendedName>
    <alternativeName>
        <fullName evidence="1">(3R)-hydroxymyristoyl-[acyl-carrier-protein] dehydratase</fullName>
        <shortName evidence="1">(3R)-hydroxymyristoyl-ACP dehydrase</shortName>
    </alternativeName>
    <alternativeName>
        <fullName evidence="1">Beta-hydroxyacyl-ACP dehydratase</fullName>
    </alternativeName>
</protein>
<organism>
    <name type="scientific">Caldicellulosiruptor bescii (strain ATCC BAA-1888 / DSM 6725 / KCTC 15123 / Z-1320)</name>
    <name type="common">Anaerocellum thermophilum</name>
    <dbReference type="NCBI Taxonomy" id="521460"/>
    <lineage>
        <taxon>Bacteria</taxon>
        <taxon>Bacillati</taxon>
        <taxon>Bacillota</taxon>
        <taxon>Bacillota incertae sedis</taxon>
        <taxon>Caldicellulosiruptorales</taxon>
        <taxon>Caldicellulosiruptoraceae</taxon>
        <taxon>Caldicellulosiruptor</taxon>
    </lineage>
</organism>